<keyword id="KW-0028">Amino-acid biosynthesis</keyword>
<keyword id="KW-0057">Aromatic amino acid biosynthesis</keyword>
<keyword id="KW-0456">Lyase</keyword>
<keyword id="KW-1185">Reference proteome</keyword>
<evidence type="ECO:0000255" key="1">
    <source>
        <dbReference type="HAMAP-Rule" id="MF_00169"/>
    </source>
</evidence>
<accession>Q7VDJ2</accession>
<name>AROQ_PROMA</name>
<organism>
    <name type="scientific">Prochlorococcus marinus (strain SARG / CCMP1375 / SS120)</name>
    <dbReference type="NCBI Taxonomy" id="167539"/>
    <lineage>
        <taxon>Bacteria</taxon>
        <taxon>Bacillati</taxon>
        <taxon>Cyanobacteriota</taxon>
        <taxon>Cyanophyceae</taxon>
        <taxon>Synechococcales</taxon>
        <taxon>Prochlorococcaceae</taxon>
        <taxon>Prochlorococcus</taxon>
    </lineage>
</organism>
<proteinExistence type="inferred from homology"/>
<comment type="function">
    <text evidence="1">Catalyzes a trans-dehydration via an enolate intermediate.</text>
</comment>
<comment type="catalytic activity">
    <reaction evidence="1">
        <text>3-dehydroquinate = 3-dehydroshikimate + H2O</text>
        <dbReference type="Rhea" id="RHEA:21096"/>
        <dbReference type="ChEBI" id="CHEBI:15377"/>
        <dbReference type="ChEBI" id="CHEBI:16630"/>
        <dbReference type="ChEBI" id="CHEBI:32364"/>
        <dbReference type="EC" id="4.2.1.10"/>
    </reaction>
</comment>
<comment type="pathway">
    <text evidence="1">Metabolic intermediate biosynthesis; chorismate biosynthesis; chorismate from D-erythrose 4-phosphate and phosphoenolpyruvate: step 3/7.</text>
</comment>
<comment type="subunit">
    <text evidence="1">Homododecamer.</text>
</comment>
<comment type="similarity">
    <text evidence="1">Belongs to the type-II 3-dehydroquinase family.</text>
</comment>
<sequence>MKFLLINGPNLNLLGQREPLIYGSETLEKIELNLKKKAKLLGVELECFQSNSEGTLVDCIQQALGKVDAILINAGAYTHTSVALRDALLSTGIPYVELHLSNTHSRESFRQKSLLADRAIGIVSGFGAMSYSLALDGALDFLKSQKSGV</sequence>
<dbReference type="EC" id="4.2.1.10" evidence="1"/>
<dbReference type="EMBL" id="AE017126">
    <property type="protein sequence ID" value="AAP99430.1"/>
    <property type="molecule type" value="Genomic_DNA"/>
</dbReference>
<dbReference type="RefSeq" id="NP_874778.1">
    <property type="nucleotide sequence ID" value="NC_005042.1"/>
</dbReference>
<dbReference type="RefSeq" id="WP_011124539.1">
    <property type="nucleotide sequence ID" value="NC_005042.1"/>
</dbReference>
<dbReference type="SMR" id="Q7VDJ2"/>
<dbReference type="STRING" id="167539.Pro_0384"/>
<dbReference type="EnsemblBacteria" id="AAP99430">
    <property type="protein sequence ID" value="AAP99430"/>
    <property type="gene ID" value="Pro_0384"/>
</dbReference>
<dbReference type="KEGG" id="pma:Pro_0384"/>
<dbReference type="PATRIC" id="fig|167539.5.peg.392"/>
<dbReference type="eggNOG" id="COG0757">
    <property type="taxonomic scope" value="Bacteria"/>
</dbReference>
<dbReference type="HOGENOM" id="CLU_090968_1_0_3"/>
<dbReference type="OrthoDB" id="9790793at2"/>
<dbReference type="UniPathway" id="UPA00053">
    <property type="reaction ID" value="UER00086"/>
</dbReference>
<dbReference type="Proteomes" id="UP000001420">
    <property type="component" value="Chromosome"/>
</dbReference>
<dbReference type="GO" id="GO:0003855">
    <property type="term" value="F:3-dehydroquinate dehydratase activity"/>
    <property type="evidence" value="ECO:0007669"/>
    <property type="project" value="UniProtKB-UniRule"/>
</dbReference>
<dbReference type="GO" id="GO:0008652">
    <property type="term" value="P:amino acid biosynthetic process"/>
    <property type="evidence" value="ECO:0007669"/>
    <property type="project" value="UniProtKB-KW"/>
</dbReference>
<dbReference type="GO" id="GO:0009073">
    <property type="term" value="P:aromatic amino acid family biosynthetic process"/>
    <property type="evidence" value="ECO:0007669"/>
    <property type="project" value="UniProtKB-KW"/>
</dbReference>
<dbReference type="GO" id="GO:0009423">
    <property type="term" value="P:chorismate biosynthetic process"/>
    <property type="evidence" value="ECO:0007669"/>
    <property type="project" value="UniProtKB-UniRule"/>
</dbReference>
<dbReference type="GO" id="GO:0019631">
    <property type="term" value="P:quinate catabolic process"/>
    <property type="evidence" value="ECO:0007669"/>
    <property type="project" value="TreeGrafter"/>
</dbReference>
<dbReference type="CDD" id="cd00466">
    <property type="entry name" value="DHQase_II"/>
    <property type="match status" value="1"/>
</dbReference>
<dbReference type="Gene3D" id="3.40.50.9100">
    <property type="entry name" value="Dehydroquinase, class II"/>
    <property type="match status" value="1"/>
</dbReference>
<dbReference type="HAMAP" id="MF_00169">
    <property type="entry name" value="AroQ"/>
    <property type="match status" value="1"/>
</dbReference>
<dbReference type="InterPro" id="IPR001874">
    <property type="entry name" value="DHquinase_II"/>
</dbReference>
<dbReference type="InterPro" id="IPR018509">
    <property type="entry name" value="DHquinase_II_CS"/>
</dbReference>
<dbReference type="InterPro" id="IPR036441">
    <property type="entry name" value="DHquinase_II_sf"/>
</dbReference>
<dbReference type="NCBIfam" id="TIGR01088">
    <property type="entry name" value="aroQ"/>
    <property type="match status" value="1"/>
</dbReference>
<dbReference type="NCBIfam" id="NF003804">
    <property type="entry name" value="PRK05395.1-1"/>
    <property type="match status" value="1"/>
</dbReference>
<dbReference type="NCBIfam" id="NF003805">
    <property type="entry name" value="PRK05395.1-2"/>
    <property type="match status" value="1"/>
</dbReference>
<dbReference type="NCBIfam" id="NF003806">
    <property type="entry name" value="PRK05395.1-3"/>
    <property type="match status" value="1"/>
</dbReference>
<dbReference type="NCBIfam" id="NF003807">
    <property type="entry name" value="PRK05395.1-4"/>
    <property type="match status" value="1"/>
</dbReference>
<dbReference type="PANTHER" id="PTHR21272">
    <property type="entry name" value="CATABOLIC 3-DEHYDROQUINASE"/>
    <property type="match status" value="1"/>
</dbReference>
<dbReference type="PANTHER" id="PTHR21272:SF3">
    <property type="entry name" value="CATABOLIC 3-DEHYDROQUINASE"/>
    <property type="match status" value="1"/>
</dbReference>
<dbReference type="Pfam" id="PF01220">
    <property type="entry name" value="DHquinase_II"/>
    <property type="match status" value="1"/>
</dbReference>
<dbReference type="PIRSF" id="PIRSF001399">
    <property type="entry name" value="DHquinase_II"/>
    <property type="match status" value="1"/>
</dbReference>
<dbReference type="SUPFAM" id="SSF52304">
    <property type="entry name" value="Type II 3-dehydroquinate dehydratase"/>
    <property type="match status" value="1"/>
</dbReference>
<dbReference type="PROSITE" id="PS01029">
    <property type="entry name" value="DEHYDROQUINASE_II"/>
    <property type="match status" value="1"/>
</dbReference>
<gene>
    <name evidence="1" type="primary">aroQ</name>
    <name type="ordered locus">Pro_0384</name>
</gene>
<feature type="chain" id="PRO_0000159915" description="3-dehydroquinate dehydratase">
    <location>
        <begin position="1"/>
        <end position="149"/>
    </location>
</feature>
<feature type="active site" description="Proton acceptor" evidence="1">
    <location>
        <position position="22"/>
    </location>
</feature>
<feature type="active site" description="Proton donor" evidence="1">
    <location>
        <position position="99"/>
    </location>
</feature>
<feature type="binding site" evidence="1">
    <location>
        <position position="73"/>
    </location>
    <ligand>
        <name>substrate</name>
    </ligand>
</feature>
<feature type="binding site" evidence="1">
    <location>
        <position position="79"/>
    </location>
    <ligand>
        <name>substrate</name>
    </ligand>
</feature>
<feature type="binding site" evidence="1">
    <location>
        <position position="86"/>
    </location>
    <ligand>
        <name>substrate</name>
    </ligand>
</feature>
<feature type="binding site" evidence="1">
    <location>
        <begin position="100"/>
        <end position="101"/>
    </location>
    <ligand>
        <name>substrate</name>
    </ligand>
</feature>
<feature type="binding site" evidence="1">
    <location>
        <position position="110"/>
    </location>
    <ligand>
        <name>substrate</name>
    </ligand>
</feature>
<feature type="site" description="Transition state stabilizer" evidence="1">
    <location>
        <position position="17"/>
    </location>
</feature>
<protein>
    <recommendedName>
        <fullName evidence="1">3-dehydroquinate dehydratase</fullName>
        <shortName evidence="1">3-dehydroquinase</shortName>
        <ecNumber evidence="1">4.2.1.10</ecNumber>
    </recommendedName>
    <alternativeName>
        <fullName evidence="1">Type II DHQase</fullName>
    </alternativeName>
</protein>
<reference key="1">
    <citation type="journal article" date="2003" name="Proc. Natl. Acad. Sci. U.S.A.">
        <title>Genome sequence of the cyanobacterium Prochlorococcus marinus SS120, a nearly minimal oxyphototrophic genome.</title>
        <authorList>
            <person name="Dufresne A."/>
            <person name="Salanoubat M."/>
            <person name="Partensky F."/>
            <person name="Artiguenave F."/>
            <person name="Axmann I.M."/>
            <person name="Barbe V."/>
            <person name="Duprat S."/>
            <person name="Galperin M.Y."/>
            <person name="Koonin E.V."/>
            <person name="Le Gall F."/>
            <person name="Makarova K.S."/>
            <person name="Ostrowski M."/>
            <person name="Oztas S."/>
            <person name="Robert C."/>
            <person name="Rogozin I.B."/>
            <person name="Scanlan D.J."/>
            <person name="Tandeau de Marsac N."/>
            <person name="Weissenbach J."/>
            <person name="Wincker P."/>
            <person name="Wolf Y.I."/>
            <person name="Hess W.R."/>
        </authorList>
    </citation>
    <scope>NUCLEOTIDE SEQUENCE [LARGE SCALE GENOMIC DNA]</scope>
    <source>
        <strain>SARG / CCMP1375 / SS120</strain>
    </source>
</reference>